<keyword id="KW-1003">Cell membrane</keyword>
<keyword id="KW-0472">Membrane</keyword>
<keyword id="KW-1185">Reference proteome</keyword>
<keyword id="KW-0812">Transmembrane</keyword>
<keyword id="KW-1133">Transmembrane helix</keyword>
<name>Y423_MYCGE</name>
<reference key="1">
    <citation type="journal article" date="1995" name="Science">
        <title>The minimal gene complement of Mycoplasma genitalium.</title>
        <authorList>
            <person name="Fraser C.M."/>
            <person name="Gocayne J.D."/>
            <person name="White O."/>
            <person name="Adams M.D."/>
            <person name="Clayton R.A."/>
            <person name="Fleischmann R.D."/>
            <person name="Bult C.J."/>
            <person name="Kerlavage A.R."/>
            <person name="Sutton G.G."/>
            <person name="Kelley J.M."/>
            <person name="Fritchman J.L."/>
            <person name="Weidman J.F."/>
            <person name="Small K.V."/>
            <person name="Sandusky M."/>
            <person name="Fuhrmann J.L."/>
            <person name="Nguyen D.T."/>
            <person name="Utterback T.R."/>
            <person name="Saudek D.M."/>
            <person name="Phillips C.A."/>
            <person name="Merrick J.M."/>
            <person name="Tomb J.-F."/>
            <person name="Dougherty B.A."/>
            <person name="Bott K.F."/>
            <person name="Hu P.-C."/>
            <person name="Lucier T.S."/>
            <person name="Peterson S.N."/>
            <person name="Smith H.O."/>
            <person name="Hutchison C.A. III"/>
            <person name="Venter J.C."/>
        </authorList>
    </citation>
    <scope>NUCLEOTIDE SEQUENCE [LARGE SCALE GENOMIC DNA]</scope>
    <source>
        <strain>ATCC 33530 / DSM 19775 / NCTC 10195 / G37</strain>
    </source>
</reference>
<reference key="2">
    <citation type="journal article" date="1991" name="Nucleic Acids Res.">
        <title>A random sequencing approach for placing markers on the physical map of Mycoplasma genitalium.</title>
        <authorList>
            <person name="Peterson S.N."/>
            <person name="Schramm N."/>
            <person name="Hu P.-C."/>
            <person name="Bott K.F."/>
            <person name="Hutchison C.A. III"/>
        </authorList>
    </citation>
    <scope>NUCLEOTIDE SEQUENCE [GENOMIC DNA] OF 55-138 AND 400-478</scope>
    <source>
        <strain>ATCC 33530 / DSM 19775 / NCTC 10195 / G37</strain>
    </source>
</reference>
<reference key="3">
    <citation type="journal article" date="1993" name="J. Bacteriol.">
        <title>A survey of the Mycoplasma genitalium genome by using random sequencing.</title>
        <authorList>
            <person name="Peterson S.N."/>
            <person name="Hu P.-C."/>
            <person name="Bott K.F."/>
            <person name="Hutchison C.A. III"/>
        </authorList>
    </citation>
    <scope>NUCLEOTIDE SEQUENCE [GENOMIC DNA] OF 486-561</scope>
    <source>
        <strain>ATCC 33530 / DSM 19775 / NCTC 10195 / G37</strain>
    </source>
</reference>
<evidence type="ECO:0000255" key="1"/>
<evidence type="ECO:0000305" key="2"/>
<organism>
    <name type="scientific">Mycoplasma genitalium (strain ATCC 33530 / DSM 19775 / NCTC 10195 / G37)</name>
    <name type="common">Mycoplasmoides genitalium</name>
    <dbReference type="NCBI Taxonomy" id="243273"/>
    <lineage>
        <taxon>Bacteria</taxon>
        <taxon>Bacillati</taxon>
        <taxon>Mycoplasmatota</taxon>
        <taxon>Mycoplasmoidales</taxon>
        <taxon>Mycoplasmoidaceae</taxon>
        <taxon>Mycoplasmoides</taxon>
    </lineage>
</organism>
<feature type="chain" id="PRO_0000210604" description="Uncharacterized protein MG423">
    <location>
        <begin position="1"/>
        <end position="561"/>
    </location>
</feature>
<feature type="transmembrane region" description="Helical" evidence="1">
    <location>
        <begin position="29"/>
        <end position="49"/>
    </location>
</feature>
<feature type="transmembrane region" description="Helical" evidence="1">
    <location>
        <begin position="80"/>
        <end position="100"/>
    </location>
</feature>
<feature type="sequence conflict" description="In Ref. 2." evidence="2" ref="2">
    <original>PFK</original>
    <variation>LLR</variation>
    <location>
        <begin position="136"/>
        <end position="138"/>
    </location>
</feature>
<feature type="sequence conflict" description="In Ref. 2." evidence="2" ref="2">
    <original>A</original>
    <variation>R</variation>
    <location>
        <position position="403"/>
    </location>
</feature>
<sequence length="561" mass="63397">MAKIKFFALGGQDERGKNCYVLEIDNDVFIFNVGSLTPTTAVLGVKKIIPDFSWIQENQARVKGIFIGNAITENLGSLEFLFHTVGFFPIYTSSIGASIIKSKINENKLNIARDKLEIHELKPLETIEISNHSITPFKVSSSLPSSFGFALNTDNGYIVFIDDFIVLNDKNIAFENQLNQIIPKLSDNTLLLITGVGLVGRNSGFTTPKHKSLEQLNRIITPAKGRIFVACYDSNAYSVMTLAQIARMQNRPFIIYSQSFVHLFNTIVRQKLFNNTHLNTISIEEINNSTNSIVVLTSPPDKLYAKLFKIGMNEDERIRYRKSDTFIFMTPKVAGYEEIEAQILDDIARNEVSYYNLGREILSIQASDEDMKFLVSSLKPKYIIPTGGLYRDFINFTMVLKQAGAEQNQILILFNGEVLTIENKKLDSKKNELKLNPKCVDSAGLQEIGASIMFERDQMSESGVVIIIIYFDQKKSEFLNEITYSFLGVSLDVPEKDKLKTKMEELIKKQINDIKDFTTIKKRIGKEISKELKVSIKRAVMNLFTKMTSKAPLILSTIISI</sequence>
<gene>
    <name type="ordered locus">MG423</name>
</gene>
<proteinExistence type="predicted"/>
<comment type="subcellular location">
    <subcellularLocation>
        <location evidence="2">Cell membrane</location>
        <topology evidence="2">Multi-pass membrane protein</topology>
    </subcellularLocation>
</comment>
<protein>
    <recommendedName>
        <fullName>Uncharacterized protein MG423</fullName>
    </recommendedName>
</protein>
<dbReference type="EMBL" id="L43967">
    <property type="protein sequence ID" value="AAC71647.1"/>
    <property type="molecule type" value="Genomic_DNA"/>
</dbReference>
<dbReference type="EMBL" id="X61510">
    <property type="protein sequence ID" value="CAB97509.1"/>
    <property type="molecule type" value="Genomic_DNA"/>
</dbReference>
<dbReference type="EMBL" id="X61524">
    <property type="protein sequence ID" value="CAB98129.1"/>
    <property type="molecule type" value="Genomic_DNA"/>
</dbReference>
<dbReference type="EMBL" id="U02228">
    <property type="protein sequence ID" value="AAA03380.1"/>
    <property type="molecule type" value="Genomic_DNA"/>
</dbReference>
<dbReference type="PIR" id="G64246">
    <property type="entry name" value="G64246"/>
</dbReference>
<dbReference type="RefSeq" id="WP_010869479.1">
    <property type="nucleotide sequence ID" value="NC_000908.2"/>
</dbReference>
<dbReference type="SMR" id="P47662"/>
<dbReference type="STRING" id="243273.MG_423"/>
<dbReference type="GeneID" id="88282605"/>
<dbReference type="KEGG" id="mge:MG_423"/>
<dbReference type="eggNOG" id="COG0595">
    <property type="taxonomic scope" value="Bacteria"/>
</dbReference>
<dbReference type="HOGENOM" id="CLU_008727_3_2_14"/>
<dbReference type="InParanoid" id="P47662"/>
<dbReference type="OrthoDB" id="401053at2"/>
<dbReference type="BioCyc" id="MGEN243273:G1GJ2-517-MONOMER"/>
<dbReference type="Proteomes" id="UP000000807">
    <property type="component" value="Chromosome"/>
</dbReference>
<dbReference type="GO" id="GO:0005886">
    <property type="term" value="C:plasma membrane"/>
    <property type="evidence" value="ECO:0007669"/>
    <property type="project" value="UniProtKB-SubCell"/>
</dbReference>
<dbReference type="GO" id="GO:0046872">
    <property type="term" value="F:metal ion binding"/>
    <property type="evidence" value="ECO:0007669"/>
    <property type="project" value="InterPro"/>
</dbReference>
<dbReference type="GO" id="GO:0003723">
    <property type="term" value="F:RNA binding"/>
    <property type="evidence" value="ECO:0007669"/>
    <property type="project" value="InterPro"/>
</dbReference>
<dbReference type="Gene3D" id="3.10.20.580">
    <property type="match status" value="1"/>
</dbReference>
<dbReference type="Gene3D" id="3.40.50.10710">
    <property type="entry name" value="Metallo-hydrolase/oxidoreductase"/>
    <property type="match status" value="1"/>
</dbReference>
<dbReference type="Gene3D" id="3.60.15.10">
    <property type="entry name" value="Ribonuclease Z/Hydroxyacylglutathione hydrolase-like"/>
    <property type="match status" value="1"/>
</dbReference>
<dbReference type="InterPro" id="IPR036866">
    <property type="entry name" value="RibonucZ/Hydroxyglut_hydro"/>
</dbReference>
<dbReference type="InterPro" id="IPR004613">
    <property type="entry name" value="RNase_J"/>
</dbReference>
<dbReference type="InterPro" id="IPR042173">
    <property type="entry name" value="RNase_J_2"/>
</dbReference>
<dbReference type="InterPro" id="IPR055132">
    <property type="entry name" value="RNase_J_b_CASP"/>
</dbReference>
<dbReference type="InterPro" id="IPR041636">
    <property type="entry name" value="RNase_J_C"/>
</dbReference>
<dbReference type="NCBIfam" id="TIGR00649">
    <property type="entry name" value="MG423"/>
    <property type="match status" value="1"/>
</dbReference>
<dbReference type="PANTHER" id="PTHR43694">
    <property type="entry name" value="RIBONUCLEASE J"/>
    <property type="match status" value="1"/>
</dbReference>
<dbReference type="PANTHER" id="PTHR43694:SF1">
    <property type="entry name" value="RIBONUCLEASE J"/>
    <property type="match status" value="1"/>
</dbReference>
<dbReference type="Pfam" id="PF22505">
    <property type="entry name" value="RNase_J_b_CASP"/>
    <property type="match status" value="1"/>
</dbReference>
<dbReference type="Pfam" id="PF17770">
    <property type="entry name" value="RNase_J_C"/>
    <property type="match status" value="1"/>
</dbReference>
<dbReference type="SUPFAM" id="SSF56281">
    <property type="entry name" value="Metallo-hydrolase/oxidoreductase"/>
    <property type="match status" value="1"/>
</dbReference>
<accession>P47662</accession>
<accession>Q49470</accession>
<accession>Q49480</accession>